<sequence>MKITREQVEHVARLARLELSEAELDTFTGQMDSILSYVEKLNALDTEGIVPTSHAVPMENAFRADEATGSIGVEAALANAPLRAQSFFRVPKVIE</sequence>
<organism>
    <name type="scientific">Citrifermentans bemidjiense (strain ATCC BAA-1014 / DSM 16622 / JCM 12645 / Bem)</name>
    <name type="common">Geobacter bemidjiensis</name>
    <dbReference type="NCBI Taxonomy" id="404380"/>
    <lineage>
        <taxon>Bacteria</taxon>
        <taxon>Pseudomonadati</taxon>
        <taxon>Thermodesulfobacteriota</taxon>
        <taxon>Desulfuromonadia</taxon>
        <taxon>Geobacterales</taxon>
        <taxon>Geobacteraceae</taxon>
        <taxon>Citrifermentans</taxon>
    </lineage>
</organism>
<dbReference type="EC" id="6.3.5.-" evidence="1"/>
<dbReference type="EMBL" id="CP001124">
    <property type="protein sequence ID" value="ACH40635.1"/>
    <property type="molecule type" value="Genomic_DNA"/>
</dbReference>
<dbReference type="RefSeq" id="WP_012532072.1">
    <property type="nucleotide sequence ID" value="NC_011146.1"/>
</dbReference>
<dbReference type="SMR" id="B5ED18"/>
<dbReference type="STRING" id="404380.Gbem_3643"/>
<dbReference type="KEGG" id="gbm:Gbem_3643"/>
<dbReference type="eggNOG" id="COG0721">
    <property type="taxonomic scope" value="Bacteria"/>
</dbReference>
<dbReference type="HOGENOM" id="CLU_105899_1_2_7"/>
<dbReference type="OrthoDB" id="9813938at2"/>
<dbReference type="Proteomes" id="UP000008825">
    <property type="component" value="Chromosome"/>
</dbReference>
<dbReference type="GO" id="GO:0050566">
    <property type="term" value="F:asparaginyl-tRNA synthase (glutamine-hydrolyzing) activity"/>
    <property type="evidence" value="ECO:0007669"/>
    <property type="project" value="RHEA"/>
</dbReference>
<dbReference type="GO" id="GO:0005524">
    <property type="term" value="F:ATP binding"/>
    <property type="evidence" value="ECO:0007669"/>
    <property type="project" value="UniProtKB-KW"/>
</dbReference>
<dbReference type="GO" id="GO:0050567">
    <property type="term" value="F:glutaminyl-tRNA synthase (glutamine-hydrolyzing) activity"/>
    <property type="evidence" value="ECO:0007669"/>
    <property type="project" value="UniProtKB-UniRule"/>
</dbReference>
<dbReference type="GO" id="GO:0070681">
    <property type="term" value="P:glutaminyl-tRNAGln biosynthesis via transamidation"/>
    <property type="evidence" value="ECO:0007669"/>
    <property type="project" value="TreeGrafter"/>
</dbReference>
<dbReference type="GO" id="GO:0006450">
    <property type="term" value="P:regulation of translational fidelity"/>
    <property type="evidence" value="ECO:0007669"/>
    <property type="project" value="InterPro"/>
</dbReference>
<dbReference type="GO" id="GO:0006412">
    <property type="term" value="P:translation"/>
    <property type="evidence" value="ECO:0007669"/>
    <property type="project" value="UniProtKB-UniRule"/>
</dbReference>
<dbReference type="Gene3D" id="1.10.20.60">
    <property type="entry name" value="Glu-tRNAGln amidotransferase C subunit, N-terminal domain"/>
    <property type="match status" value="1"/>
</dbReference>
<dbReference type="HAMAP" id="MF_00122">
    <property type="entry name" value="GatC"/>
    <property type="match status" value="1"/>
</dbReference>
<dbReference type="InterPro" id="IPR036113">
    <property type="entry name" value="Asp/Glu-ADT_sf_sub_c"/>
</dbReference>
<dbReference type="InterPro" id="IPR003837">
    <property type="entry name" value="GatC"/>
</dbReference>
<dbReference type="NCBIfam" id="TIGR00135">
    <property type="entry name" value="gatC"/>
    <property type="match status" value="1"/>
</dbReference>
<dbReference type="PANTHER" id="PTHR15004">
    <property type="entry name" value="GLUTAMYL-TRNA(GLN) AMIDOTRANSFERASE SUBUNIT C, MITOCHONDRIAL"/>
    <property type="match status" value="1"/>
</dbReference>
<dbReference type="PANTHER" id="PTHR15004:SF0">
    <property type="entry name" value="GLUTAMYL-TRNA(GLN) AMIDOTRANSFERASE SUBUNIT C, MITOCHONDRIAL"/>
    <property type="match status" value="1"/>
</dbReference>
<dbReference type="Pfam" id="PF02686">
    <property type="entry name" value="GatC"/>
    <property type="match status" value="1"/>
</dbReference>
<dbReference type="SUPFAM" id="SSF141000">
    <property type="entry name" value="Glu-tRNAGln amidotransferase C subunit"/>
    <property type="match status" value="1"/>
</dbReference>
<keyword id="KW-0067">ATP-binding</keyword>
<keyword id="KW-0436">Ligase</keyword>
<keyword id="KW-0547">Nucleotide-binding</keyword>
<keyword id="KW-0648">Protein biosynthesis</keyword>
<keyword id="KW-1185">Reference proteome</keyword>
<reference key="1">
    <citation type="submission" date="2008-07" db="EMBL/GenBank/DDBJ databases">
        <title>Complete sequence of Geobacter bemidjiensis BEM.</title>
        <authorList>
            <consortium name="US DOE Joint Genome Institute"/>
            <person name="Lucas S."/>
            <person name="Copeland A."/>
            <person name="Lapidus A."/>
            <person name="Glavina del Rio T."/>
            <person name="Dalin E."/>
            <person name="Tice H."/>
            <person name="Bruce D."/>
            <person name="Goodwin L."/>
            <person name="Pitluck S."/>
            <person name="Kiss H."/>
            <person name="Brettin T."/>
            <person name="Detter J.C."/>
            <person name="Han C."/>
            <person name="Kuske C.R."/>
            <person name="Schmutz J."/>
            <person name="Larimer F."/>
            <person name="Land M."/>
            <person name="Hauser L."/>
            <person name="Kyrpides N."/>
            <person name="Lykidis A."/>
            <person name="Lovley D."/>
            <person name="Richardson P."/>
        </authorList>
    </citation>
    <scope>NUCLEOTIDE SEQUENCE [LARGE SCALE GENOMIC DNA]</scope>
    <source>
        <strain>ATCC BAA-1014 / DSM 16622 / JCM 12645 / Bem</strain>
    </source>
</reference>
<protein>
    <recommendedName>
        <fullName evidence="1">Aspartyl/glutamyl-tRNA(Asn/Gln) amidotransferase subunit C</fullName>
        <shortName evidence="1">Asp/Glu-ADT subunit C</shortName>
        <ecNumber evidence="1">6.3.5.-</ecNumber>
    </recommendedName>
</protein>
<accession>B5ED18</accession>
<evidence type="ECO:0000255" key="1">
    <source>
        <dbReference type="HAMAP-Rule" id="MF_00122"/>
    </source>
</evidence>
<comment type="function">
    <text evidence="1">Allows the formation of correctly charged Asn-tRNA(Asn) or Gln-tRNA(Gln) through the transamidation of misacylated Asp-tRNA(Asn) or Glu-tRNA(Gln) in organisms which lack either or both of asparaginyl-tRNA or glutaminyl-tRNA synthetases. The reaction takes place in the presence of glutamine and ATP through an activated phospho-Asp-tRNA(Asn) or phospho-Glu-tRNA(Gln).</text>
</comment>
<comment type="catalytic activity">
    <reaction evidence="1">
        <text>L-glutamyl-tRNA(Gln) + L-glutamine + ATP + H2O = L-glutaminyl-tRNA(Gln) + L-glutamate + ADP + phosphate + H(+)</text>
        <dbReference type="Rhea" id="RHEA:17521"/>
        <dbReference type="Rhea" id="RHEA-COMP:9681"/>
        <dbReference type="Rhea" id="RHEA-COMP:9684"/>
        <dbReference type="ChEBI" id="CHEBI:15377"/>
        <dbReference type="ChEBI" id="CHEBI:15378"/>
        <dbReference type="ChEBI" id="CHEBI:29985"/>
        <dbReference type="ChEBI" id="CHEBI:30616"/>
        <dbReference type="ChEBI" id="CHEBI:43474"/>
        <dbReference type="ChEBI" id="CHEBI:58359"/>
        <dbReference type="ChEBI" id="CHEBI:78520"/>
        <dbReference type="ChEBI" id="CHEBI:78521"/>
        <dbReference type="ChEBI" id="CHEBI:456216"/>
    </reaction>
</comment>
<comment type="catalytic activity">
    <reaction evidence="1">
        <text>L-aspartyl-tRNA(Asn) + L-glutamine + ATP + H2O = L-asparaginyl-tRNA(Asn) + L-glutamate + ADP + phosphate + 2 H(+)</text>
        <dbReference type="Rhea" id="RHEA:14513"/>
        <dbReference type="Rhea" id="RHEA-COMP:9674"/>
        <dbReference type="Rhea" id="RHEA-COMP:9677"/>
        <dbReference type="ChEBI" id="CHEBI:15377"/>
        <dbReference type="ChEBI" id="CHEBI:15378"/>
        <dbReference type="ChEBI" id="CHEBI:29985"/>
        <dbReference type="ChEBI" id="CHEBI:30616"/>
        <dbReference type="ChEBI" id="CHEBI:43474"/>
        <dbReference type="ChEBI" id="CHEBI:58359"/>
        <dbReference type="ChEBI" id="CHEBI:78515"/>
        <dbReference type="ChEBI" id="CHEBI:78516"/>
        <dbReference type="ChEBI" id="CHEBI:456216"/>
    </reaction>
</comment>
<comment type="subunit">
    <text evidence="1">Heterotrimer of A, B and C subunits.</text>
</comment>
<comment type="similarity">
    <text evidence="1">Belongs to the GatC family.</text>
</comment>
<gene>
    <name evidence="1" type="primary">gatC</name>
    <name type="ordered locus">Gbem_3643</name>
</gene>
<feature type="chain" id="PRO_1000095284" description="Aspartyl/glutamyl-tRNA(Asn/Gln) amidotransferase subunit C">
    <location>
        <begin position="1"/>
        <end position="95"/>
    </location>
</feature>
<proteinExistence type="inferred from homology"/>
<name>GATC_CITBB</name>